<comment type="interaction">
    <interactant intactId="EBI-11793940">
        <id>P09708</id>
    </interactant>
    <interactant intactId="EBI-357481">
        <id>Q12959</id>
        <label>DLG1</label>
    </interactant>
    <organismsDiffer>true</organismsDiffer>
    <experiments>2</experiments>
</comment>
<comment type="similarity">
    <text evidence="1">Belongs to the herpesviridae US1 family.</text>
</comment>
<organism>
    <name type="scientific">Human cytomegalovirus (strain AD169)</name>
    <name type="common">HHV-5</name>
    <name type="synonym">Human herpesvirus 5</name>
    <dbReference type="NCBI Taxonomy" id="10360"/>
    <lineage>
        <taxon>Viruses</taxon>
        <taxon>Duplodnaviria</taxon>
        <taxon>Heunggongvirae</taxon>
        <taxon>Peploviricota</taxon>
        <taxon>Herviviricetes</taxon>
        <taxon>Herpesvirales</taxon>
        <taxon>Orthoherpesviridae</taxon>
        <taxon>Betaherpesvirinae</taxon>
        <taxon>Cytomegalovirus</taxon>
        <taxon>Cytomegalovirus humanbeta5</taxon>
        <taxon>Human cytomegalovirus</taxon>
    </lineage>
</organism>
<keyword id="KW-1185">Reference proteome</keyword>
<gene>
    <name type="primary">US32</name>
</gene>
<protein>
    <recommendedName>
        <fullName>Uncharacterized protein HHRF7</fullName>
    </recommendedName>
</protein>
<evidence type="ECO:0000305" key="1"/>
<name>US32_HCMVA</name>
<feature type="chain" id="PRO_0000115292" description="Uncharacterized protein HHRF7">
    <location>
        <begin position="1"/>
        <end position="183"/>
    </location>
</feature>
<proteinExistence type="evidence at protein level"/>
<reference key="1">
    <citation type="journal article" date="1986" name="J. Mol. Biol.">
        <title>Sequence of the short unique region, short repeats, and part of the long repeats of human cytomegalovirus.</title>
        <authorList>
            <person name="Weston K.M."/>
            <person name="Barrell B.G."/>
        </authorList>
    </citation>
    <scope>NUCLEOTIDE SEQUENCE [GENOMIC DNA]</scope>
</reference>
<reference key="2">
    <citation type="journal article" date="1990" name="Curr. Top. Microbiol. Immunol.">
        <title>Analysis of the protein-coding content of the sequence of human cytomegalovirus strain AD169.</title>
        <authorList>
            <person name="Chee M.S."/>
            <person name="Bankier A.T."/>
            <person name="Beck S."/>
            <person name="Bohni R."/>
            <person name="Brown C.M."/>
            <person name="Cerny R."/>
            <person name="Horsnell T."/>
            <person name="Hutchison C.A. III"/>
            <person name="Kouzarides T."/>
            <person name="Martignetti J.A."/>
            <person name="Preddie E."/>
            <person name="Satchwell S.C."/>
            <person name="Tomlinson P."/>
            <person name="Weston K.M."/>
            <person name="Barrell B.G."/>
        </authorList>
    </citation>
    <scope>NUCLEOTIDE SEQUENCE [LARGE SCALE GENOMIC DNA]</scope>
</reference>
<reference key="3">
    <citation type="journal article" date="2003" name="J. Gen. Virol.">
        <title>The human cytomegalovirus genome revisited: comparison with the chimpanzee cytomegalovirus genome.</title>
        <authorList>
            <person name="Davison A.J."/>
            <person name="Dolan A."/>
            <person name="Akter P."/>
            <person name="Addison C."/>
            <person name="Dargan D.J."/>
            <person name="Alcendor D.J."/>
            <person name="McGeoch D.J."/>
            <person name="Hayward G.S."/>
        </authorList>
    </citation>
    <scope>GENOME REANNOTATION</scope>
</reference>
<reference key="4">
    <citation type="journal article" date="2003" name="J. Gen. Virol.">
        <authorList>
            <person name="Davison A.J."/>
            <person name="Dolan A."/>
            <person name="Akter P."/>
            <person name="Addison C."/>
            <person name="Dargan D.J."/>
            <person name="Alcendor D.J."/>
            <person name="McGeoch D.J."/>
            <person name="Hayward G.S."/>
        </authorList>
    </citation>
    <scope>ERRATUM OF PUBMED:12533697</scope>
</reference>
<sequence length="183" mass="22058">MAMYTSESERDWRRVIHDSHGLWCDCGDWREHLYCVYDSHFQRRPTTRAERRAANWRRQMRRLHRLWCFCQDWKCHALYAEWDGKESDDESSASSSGEAPEQQVPAWKTVRAFSRAYHHRINRGLRGTPPPRNLPGYEHASEGWRFCSRRERREDDLRTRAEPDRVVFQLGGVPPRRHRETYV</sequence>
<organismHost>
    <name type="scientific">Homo sapiens</name>
    <name type="common">Human</name>
    <dbReference type="NCBI Taxonomy" id="9606"/>
</organismHost>
<dbReference type="EMBL" id="X17403">
    <property type="protein sequence ID" value="CAA35264.1"/>
    <property type="molecule type" value="Genomic_DNA"/>
</dbReference>
<dbReference type="EMBL" id="X04650">
    <property type="protein sequence ID" value="CAA28343.1"/>
    <property type="molecule type" value="Genomic_DNA"/>
</dbReference>
<dbReference type="EMBL" id="BK000394">
    <property type="protein sequence ID" value="DAA00220.1"/>
    <property type="molecule type" value="Genomic_DNA"/>
</dbReference>
<dbReference type="PIR" id="H27216">
    <property type="entry name" value="QQBED8"/>
</dbReference>
<dbReference type="SMR" id="P09708"/>
<dbReference type="IntAct" id="P09708">
    <property type="interactions" value="1"/>
</dbReference>
<dbReference type="MINT" id="P09708"/>
<dbReference type="Proteomes" id="UP000008991">
    <property type="component" value="Segment"/>
</dbReference>
<dbReference type="Proteomes" id="UP000008992">
    <property type="component" value="Segment"/>
</dbReference>
<dbReference type="InterPro" id="IPR004118">
    <property type="entry name" value="HEV_TT_vir_Orf2/Gyrovir_Vp2_N"/>
</dbReference>
<dbReference type="Pfam" id="PF02957">
    <property type="entry name" value="TT_ORF2-like"/>
    <property type="match status" value="1"/>
</dbReference>
<accession>P09708</accession>
<accession>Q7M6G8</accession>